<feature type="chain" id="PRO_1000015688" description="Elongation factor 1-alpha">
    <location>
        <begin position="1"/>
        <end position="425"/>
    </location>
</feature>
<feature type="domain" description="tr-type G">
    <location>
        <begin position="5"/>
        <end position="221"/>
    </location>
</feature>
<feature type="region of interest" description="G1" evidence="1">
    <location>
        <begin position="14"/>
        <end position="21"/>
    </location>
</feature>
<feature type="region of interest" description="G2" evidence="1">
    <location>
        <begin position="70"/>
        <end position="74"/>
    </location>
</feature>
<feature type="region of interest" description="G3" evidence="1">
    <location>
        <begin position="91"/>
        <end position="94"/>
    </location>
</feature>
<feature type="region of interest" description="G4" evidence="1">
    <location>
        <begin position="146"/>
        <end position="149"/>
    </location>
</feature>
<feature type="region of interest" description="G5" evidence="1">
    <location>
        <begin position="185"/>
        <end position="187"/>
    </location>
</feature>
<feature type="binding site" evidence="2">
    <location>
        <begin position="14"/>
        <end position="21"/>
    </location>
    <ligand>
        <name>GTP</name>
        <dbReference type="ChEBI" id="CHEBI:37565"/>
    </ligand>
</feature>
<feature type="binding site" evidence="2">
    <location>
        <position position="21"/>
    </location>
    <ligand>
        <name>Mg(2+)</name>
        <dbReference type="ChEBI" id="CHEBI:18420"/>
    </ligand>
</feature>
<feature type="binding site" evidence="2">
    <location>
        <begin position="91"/>
        <end position="95"/>
    </location>
    <ligand>
        <name>GTP</name>
        <dbReference type="ChEBI" id="CHEBI:37565"/>
    </ligand>
</feature>
<feature type="binding site" evidence="2">
    <location>
        <begin position="146"/>
        <end position="149"/>
    </location>
    <ligand>
        <name>GTP</name>
        <dbReference type="ChEBI" id="CHEBI:37565"/>
    </ligand>
</feature>
<reference key="1">
    <citation type="journal article" date="2016" name="Stand. Genomic Sci.">
        <title>Complete genome sequence of Methanospirillum hungatei type strain JF1.</title>
        <authorList>
            <person name="Gunsalus R.P."/>
            <person name="Cook L.E."/>
            <person name="Crable B."/>
            <person name="Rohlin L."/>
            <person name="McDonald E."/>
            <person name="Mouttaki H."/>
            <person name="Sieber J.R."/>
            <person name="Poweleit N."/>
            <person name="Zhou H."/>
            <person name="Lapidus A.L."/>
            <person name="Daligault H.E."/>
            <person name="Land M."/>
            <person name="Gilna P."/>
            <person name="Ivanova N."/>
            <person name="Kyrpides N."/>
            <person name="Culley D.E."/>
            <person name="McInerney M.J."/>
        </authorList>
    </citation>
    <scope>NUCLEOTIDE SEQUENCE [LARGE SCALE GENOMIC DNA]</scope>
    <source>
        <strain>ATCC 27890 / DSM 864 / NBRC 100397 / JF-1</strain>
    </source>
</reference>
<keyword id="KW-0963">Cytoplasm</keyword>
<keyword id="KW-0251">Elongation factor</keyword>
<keyword id="KW-0342">GTP-binding</keyword>
<keyword id="KW-0378">Hydrolase</keyword>
<keyword id="KW-0460">Magnesium</keyword>
<keyword id="KW-0479">Metal-binding</keyword>
<keyword id="KW-0547">Nucleotide-binding</keyword>
<keyword id="KW-0648">Protein biosynthesis</keyword>
<keyword id="KW-1185">Reference proteome</keyword>
<organism>
    <name type="scientific">Methanospirillum hungatei JF-1 (strain ATCC 27890 / DSM 864 / NBRC 100397 / JF-1)</name>
    <dbReference type="NCBI Taxonomy" id="323259"/>
    <lineage>
        <taxon>Archaea</taxon>
        <taxon>Methanobacteriati</taxon>
        <taxon>Methanobacteriota</taxon>
        <taxon>Stenosarchaea group</taxon>
        <taxon>Methanomicrobia</taxon>
        <taxon>Methanomicrobiales</taxon>
        <taxon>Methanospirillaceae</taxon>
        <taxon>Methanospirillum</taxon>
    </lineage>
</organism>
<protein>
    <recommendedName>
        <fullName evidence="2">Elongation factor 1-alpha</fullName>
        <shortName evidence="2">EF-1-alpha</shortName>
        <ecNumber evidence="2">3.6.5.3</ecNumber>
    </recommendedName>
    <alternativeName>
        <fullName evidence="2">Elongation factor Tu</fullName>
        <shortName evidence="2">EF-Tu</shortName>
    </alternativeName>
</protein>
<proteinExistence type="inferred from homology"/>
<name>EF1A_METHJ</name>
<sequence>MATEKPHINLAVIGHIDHGKSTTVGRLMYEAGAVPAHIIEQYKKEAESKGKGSFAFAWVMDNLKEERERGITIDIAHKRFDTDKYYFTVVDCPGHRDFVKNMITGASQADAAVIVVAAPDGVMEQTKEHVFLSKTLGIKQLIVAVNKMDAANYDEARFNQVKSDVGALLKMVGTNPDTVKFIPISAFEGDNITKNSDKMPWYKGKTLFGLLDELEVPDKPTEKPLRVPIQDAYSISGIGTVPVGRVETGILKKGMNVTFMPANKSGEVKSIEMHHEEIPQAVPGDNIGFNVRGIGKDDVRRGDVCGASDNPPAVAEEFTAQIVVLQHPSAITVGYTPVFHCHTAQTACTFTELVKKLDPRTGQTLEENPTFLKAGDAAIIKCHPTKPLCLENAKEFPQLGRFAIRDMGQTIAAGMCINVVKKQMR</sequence>
<gene>
    <name evidence="2" type="primary">tuf</name>
    <name type="ordered locus">Mhun_1592</name>
</gene>
<accession>Q2FRI3</accession>
<comment type="function">
    <text evidence="2">GTP hydrolase that promotes the GTP-dependent binding of aminoacyl-tRNA to the A-site of ribosomes during protein biosynthesis.</text>
</comment>
<comment type="catalytic activity">
    <reaction evidence="2">
        <text>GTP + H2O = GDP + phosphate + H(+)</text>
        <dbReference type="Rhea" id="RHEA:19669"/>
        <dbReference type="ChEBI" id="CHEBI:15377"/>
        <dbReference type="ChEBI" id="CHEBI:15378"/>
        <dbReference type="ChEBI" id="CHEBI:37565"/>
        <dbReference type="ChEBI" id="CHEBI:43474"/>
        <dbReference type="ChEBI" id="CHEBI:58189"/>
        <dbReference type="EC" id="3.6.5.3"/>
    </reaction>
    <physiologicalReaction direction="left-to-right" evidence="2">
        <dbReference type="Rhea" id="RHEA:19670"/>
    </physiologicalReaction>
</comment>
<comment type="subcellular location">
    <subcellularLocation>
        <location evidence="2">Cytoplasm</location>
    </subcellularLocation>
</comment>
<comment type="similarity">
    <text evidence="2">Belongs to the TRAFAC class translation factor GTPase superfamily. Classic translation factor GTPase family. EF-Tu/EF-1A subfamily.</text>
</comment>
<dbReference type="EC" id="3.6.5.3" evidence="2"/>
<dbReference type="EMBL" id="CP000254">
    <property type="protein sequence ID" value="ABD41323.1"/>
    <property type="molecule type" value="Genomic_DNA"/>
</dbReference>
<dbReference type="RefSeq" id="WP_011448588.1">
    <property type="nucleotide sequence ID" value="NC_007796.1"/>
</dbReference>
<dbReference type="SMR" id="Q2FRI3"/>
<dbReference type="FunCoup" id="Q2FRI3">
    <property type="interactions" value="116"/>
</dbReference>
<dbReference type="STRING" id="323259.Mhun_1592"/>
<dbReference type="EnsemblBacteria" id="ABD41323">
    <property type="protein sequence ID" value="ABD41323"/>
    <property type="gene ID" value="Mhun_1592"/>
</dbReference>
<dbReference type="GeneID" id="3923589"/>
<dbReference type="KEGG" id="mhu:Mhun_1592"/>
<dbReference type="eggNOG" id="arCOG01561">
    <property type="taxonomic scope" value="Archaea"/>
</dbReference>
<dbReference type="HOGENOM" id="CLU_007265_3_5_2"/>
<dbReference type="InParanoid" id="Q2FRI3"/>
<dbReference type="OrthoDB" id="371718at2157"/>
<dbReference type="Proteomes" id="UP000001941">
    <property type="component" value="Chromosome"/>
</dbReference>
<dbReference type="GO" id="GO:0005737">
    <property type="term" value="C:cytoplasm"/>
    <property type="evidence" value="ECO:0007669"/>
    <property type="project" value="UniProtKB-SubCell"/>
</dbReference>
<dbReference type="GO" id="GO:0005525">
    <property type="term" value="F:GTP binding"/>
    <property type="evidence" value="ECO:0007669"/>
    <property type="project" value="UniProtKB-UniRule"/>
</dbReference>
<dbReference type="GO" id="GO:0003924">
    <property type="term" value="F:GTPase activity"/>
    <property type="evidence" value="ECO:0007669"/>
    <property type="project" value="InterPro"/>
</dbReference>
<dbReference type="GO" id="GO:0003746">
    <property type="term" value="F:translation elongation factor activity"/>
    <property type="evidence" value="ECO:0007669"/>
    <property type="project" value="UniProtKB-UniRule"/>
</dbReference>
<dbReference type="CDD" id="cd01883">
    <property type="entry name" value="EF1_alpha"/>
    <property type="match status" value="1"/>
</dbReference>
<dbReference type="CDD" id="cd03693">
    <property type="entry name" value="EF1_alpha_II"/>
    <property type="match status" value="1"/>
</dbReference>
<dbReference type="CDD" id="cd03705">
    <property type="entry name" value="EF1_alpha_III"/>
    <property type="match status" value="1"/>
</dbReference>
<dbReference type="FunFam" id="2.40.30.10:FF:000003">
    <property type="entry name" value="Elongation factor 1-alpha"/>
    <property type="match status" value="1"/>
</dbReference>
<dbReference type="FunFam" id="2.40.30.10:FF:000005">
    <property type="entry name" value="Elongation factor 1-alpha"/>
    <property type="match status" value="1"/>
</dbReference>
<dbReference type="Gene3D" id="3.40.50.300">
    <property type="entry name" value="P-loop containing nucleotide triphosphate hydrolases"/>
    <property type="match status" value="1"/>
</dbReference>
<dbReference type="Gene3D" id="2.40.30.10">
    <property type="entry name" value="Translation factors"/>
    <property type="match status" value="2"/>
</dbReference>
<dbReference type="HAMAP" id="MF_00118_A">
    <property type="entry name" value="EF_Tu_A"/>
    <property type="match status" value="1"/>
</dbReference>
<dbReference type="InterPro" id="IPR004161">
    <property type="entry name" value="EFTu-like_2"/>
</dbReference>
<dbReference type="InterPro" id="IPR031157">
    <property type="entry name" value="G_TR_CS"/>
</dbReference>
<dbReference type="InterPro" id="IPR054696">
    <property type="entry name" value="GTP-eEF1A_C"/>
</dbReference>
<dbReference type="InterPro" id="IPR027417">
    <property type="entry name" value="P-loop_NTPase"/>
</dbReference>
<dbReference type="InterPro" id="IPR005225">
    <property type="entry name" value="Small_GTP-bd"/>
</dbReference>
<dbReference type="InterPro" id="IPR000795">
    <property type="entry name" value="T_Tr_GTP-bd_dom"/>
</dbReference>
<dbReference type="InterPro" id="IPR050100">
    <property type="entry name" value="TRAFAC_GTPase_members"/>
</dbReference>
<dbReference type="InterPro" id="IPR009000">
    <property type="entry name" value="Transl_B-barrel_sf"/>
</dbReference>
<dbReference type="InterPro" id="IPR009001">
    <property type="entry name" value="Transl_elong_EF1A/Init_IF2_C"/>
</dbReference>
<dbReference type="InterPro" id="IPR004539">
    <property type="entry name" value="Transl_elong_EF1A_euk/arc"/>
</dbReference>
<dbReference type="NCBIfam" id="TIGR00483">
    <property type="entry name" value="EF-1_alpha"/>
    <property type="match status" value="1"/>
</dbReference>
<dbReference type="NCBIfam" id="NF008969">
    <property type="entry name" value="PRK12317.1"/>
    <property type="match status" value="1"/>
</dbReference>
<dbReference type="NCBIfam" id="TIGR00231">
    <property type="entry name" value="small_GTP"/>
    <property type="match status" value="1"/>
</dbReference>
<dbReference type="PANTHER" id="PTHR23115">
    <property type="entry name" value="TRANSLATION FACTOR"/>
    <property type="match status" value="1"/>
</dbReference>
<dbReference type="Pfam" id="PF22594">
    <property type="entry name" value="GTP-eEF1A_C"/>
    <property type="match status" value="1"/>
</dbReference>
<dbReference type="Pfam" id="PF00009">
    <property type="entry name" value="GTP_EFTU"/>
    <property type="match status" value="1"/>
</dbReference>
<dbReference type="Pfam" id="PF03144">
    <property type="entry name" value="GTP_EFTU_D2"/>
    <property type="match status" value="1"/>
</dbReference>
<dbReference type="PRINTS" id="PR00315">
    <property type="entry name" value="ELONGATNFCT"/>
</dbReference>
<dbReference type="SUPFAM" id="SSF50465">
    <property type="entry name" value="EF-Tu/eEF-1alpha/eIF2-gamma C-terminal domain"/>
    <property type="match status" value="1"/>
</dbReference>
<dbReference type="SUPFAM" id="SSF52540">
    <property type="entry name" value="P-loop containing nucleoside triphosphate hydrolases"/>
    <property type="match status" value="1"/>
</dbReference>
<dbReference type="SUPFAM" id="SSF50447">
    <property type="entry name" value="Translation proteins"/>
    <property type="match status" value="1"/>
</dbReference>
<dbReference type="PROSITE" id="PS00301">
    <property type="entry name" value="G_TR_1"/>
    <property type="match status" value="1"/>
</dbReference>
<dbReference type="PROSITE" id="PS51722">
    <property type="entry name" value="G_TR_2"/>
    <property type="match status" value="1"/>
</dbReference>
<evidence type="ECO:0000250" key="1"/>
<evidence type="ECO:0000255" key="2">
    <source>
        <dbReference type="HAMAP-Rule" id="MF_00118"/>
    </source>
</evidence>